<sequence length="310" mass="35100">MFHHVTVLLEETVDQLNIDPNGIYVDCTLGGAGHSLYLVKQLQEGHLISIDQDQTAIDNAHIILKDYLDKVTFVKDNFRNLSDILAHLDIQKVDGILYDLGVSSPQLDVGERGFSYHQEAKLDMRMDQTQTLSAYEVVNTWPYEKLVSIFFRYGEEKFSKQIARKIEAERELKPIETTTELVEIIKAAIPAPARRTGGHPAKRVFQAIRIAVNDELGAFESSIEQAIDSVKPGGRISVITFHSLEDRLCKQVFQEYSKGPDIPRGLPVVPPEYQPKLKKITRKPITSSNEELEHNNRARSAKLRVVEILK</sequence>
<accession>B9EB47</accession>
<protein>
    <recommendedName>
        <fullName evidence="1">Ribosomal RNA small subunit methyltransferase H</fullName>
        <ecNumber evidence="1">2.1.1.199</ecNumber>
    </recommendedName>
    <alternativeName>
        <fullName evidence="1">16S rRNA m(4)C1402 methyltransferase</fullName>
    </alternativeName>
    <alternativeName>
        <fullName evidence="1">rRNA (cytosine-N(4)-)-methyltransferase RsmH</fullName>
    </alternativeName>
</protein>
<organism>
    <name type="scientific">Macrococcus caseolyticus (strain JCSC5402)</name>
    <name type="common">Macrococcoides caseolyticum</name>
    <dbReference type="NCBI Taxonomy" id="458233"/>
    <lineage>
        <taxon>Bacteria</taxon>
        <taxon>Bacillati</taxon>
        <taxon>Bacillota</taxon>
        <taxon>Bacilli</taxon>
        <taxon>Bacillales</taxon>
        <taxon>Staphylococcaceae</taxon>
        <taxon>Macrococcoides</taxon>
    </lineage>
</organism>
<dbReference type="EC" id="2.1.1.199" evidence="1"/>
<dbReference type="EMBL" id="AP009484">
    <property type="protein sequence ID" value="BAH17458.1"/>
    <property type="molecule type" value="Genomic_DNA"/>
</dbReference>
<dbReference type="RefSeq" id="WP_012656659.1">
    <property type="nucleotide sequence ID" value="NC_011999.1"/>
</dbReference>
<dbReference type="SMR" id="B9EB47"/>
<dbReference type="STRING" id="458233.MCCL_0751"/>
<dbReference type="KEGG" id="mcl:MCCL_0751"/>
<dbReference type="eggNOG" id="COG0275">
    <property type="taxonomic scope" value="Bacteria"/>
</dbReference>
<dbReference type="HOGENOM" id="CLU_038422_2_0_9"/>
<dbReference type="OrthoDB" id="9806637at2"/>
<dbReference type="Proteomes" id="UP000001383">
    <property type="component" value="Chromosome"/>
</dbReference>
<dbReference type="GO" id="GO:0005737">
    <property type="term" value="C:cytoplasm"/>
    <property type="evidence" value="ECO:0007669"/>
    <property type="project" value="UniProtKB-SubCell"/>
</dbReference>
<dbReference type="GO" id="GO:0071424">
    <property type="term" value="F:rRNA (cytosine-N4-)-methyltransferase activity"/>
    <property type="evidence" value="ECO:0007669"/>
    <property type="project" value="UniProtKB-UniRule"/>
</dbReference>
<dbReference type="GO" id="GO:0070475">
    <property type="term" value="P:rRNA base methylation"/>
    <property type="evidence" value="ECO:0007669"/>
    <property type="project" value="UniProtKB-UniRule"/>
</dbReference>
<dbReference type="FunFam" id="1.10.150.170:FF:000001">
    <property type="entry name" value="Ribosomal RNA small subunit methyltransferase H"/>
    <property type="match status" value="1"/>
</dbReference>
<dbReference type="Gene3D" id="1.10.150.170">
    <property type="entry name" value="Putative methyltransferase TM0872, insert domain"/>
    <property type="match status" value="1"/>
</dbReference>
<dbReference type="Gene3D" id="3.40.50.150">
    <property type="entry name" value="Vaccinia Virus protein VP39"/>
    <property type="match status" value="1"/>
</dbReference>
<dbReference type="HAMAP" id="MF_01007">
    <property type="entry name" value="16SrRNA_methyltr_H"/>
    <property type="match status" value="1"/>
</dbReference>
<dbReference type="InterPro" id="IPR002903">
    <property type="entry name" value="RsmH"/>
</dbReference>
<dbReference type="InterPro" id="IPR023397">
    <property type="entry name" value="SAM-dep_MeTrfase_MraW_recog"/>
</dbReference>
<dbReference type="InterPro" id="IPR029063">
    <property type="entry name" value="SAM-dependent_MTases_sf"/>
</dbReference>
<dbReference type="NCBIfam" id="TIGR00006">
    <property type="entry name" value="16S rRNA (cytosine(1402)-N(4))-methyltransferase RsmH"/>
    <property type="match status" value="1"/>
</dbReference>
<dbReference type="PANTHER" id="PTHR11265:SF0">
    <property type="entry name" value="12S RRNA N4-METHYLCYTIDINE METHYLTRANSFERASE"/>
    <property type="match status" value="1"/>
</dbReference>
<dbReference type="PANTHER" id="PTHR11265">
    <property type="entry name" value="S-ADENOSYL-METHYLTRANSFERASE MRAW"/>
    <property type="match status" value="1"/>
</dbReference>
<dbReference type="Pfam" id="PF01795">
    <property type="entry name" value="Methyltransf_5"/>
    <property type="match status" value="1"/>
</dbReference>
<dbReference type="PIRSF" id="PIRSF004486">
    <property type="entry name" value="MraW"/>
    <property type="match status" value="1"/>
</dbReference>
<dbReference type="SUPFAM" id="SSF81799">
    <property type="entry name" value="Putative methyltransferase TM0872, insert domain"/>
    <property type="match status" value="1"/>
</dbReference>
<dbReference type="SUPFAM" id="SSF53335">
    <property type="entry name" value="S-adenosyl-L-methionine-dependent methyltransferases"/>
    <property type="match status" value="1"/>
</dbReference>
<keyword id="KW-0963">Cytoplasm</keyword>
<keyword id="KW-0489">Methyltransferase</keyword>
<keyword id="KW-1185">Reference proteome</keyword>
<keyword id="KW-0698">rRNA processing</keyword>
<keyword id="KW-0949">S-adenosyl-L-methionine</keyword>
<keyword id="KW-0808">Transferase</keyword>
<proteinExistence type="inferred from homology"/>
<reference key="1">
    <citation type="journal article" date="2009" name="J. Bacteriol.">
        <title>Complete genome sequence of Macrococcus caseolyticus strain JCSCS5402, reflecting the ancestral genome of the human-pathogenic staphylococci.</title>
        <authorList>
            <person name="Baba T."/>
            <person name="Kuwahara-Arai K."/>
            <person name="Uchiyama I."/>
            <person name="Takeuchi F."/>
            <person name="Ito T."/>
            <person name="Hiramatsu K."/>
        </authorList>
    </citation>
    <scope>NUCLEOTIDE SEQUENCE [LARGE SCALE GENOMIC DNA]</scope>
    <source>
        <strain>JCSC5402</strain>
    </source>
</reference>
<evidence type="ECO:0000255" key="1">
    <source>
        <dbReference type="HAMAP-Rule" id="MF_01007"/>
    </source>
</evidence>
<comment type="function">
    <text evidence="1">Specifically methylates the N4 position of cytidine in position 1402 (C1402) of 16S rRNA.</text>
</comment>
<comment type="catalytic activity">
    <reaction evidence="1">
        <text>cytidine(1402) in 16S rRNA + S-adenosyl-L-methionine = N(4)-methylcytidine(1402) in 16S rRNA + S-adenosyl-L-homocysteine + H(+)</text>
        <dbReference type="Rhea" id="RHEA:42928"/>
        <dbReference type="Rhea" id="RHEA-COMP:10286"/>
        <dbReference type="Rhea" id="RHEA-COMP:10287"/>
        <dbReference type="ChEBI" id="CHEBI:15378"/>
        <dbReference type="ChEBI" id="CHEBI:57856"/>
        <dbReference type="ChEBI" id="CHEBI:59789"/>
        <dbReference type="ChEBI" id="CHEBI:74506"/>
        <dbReference type="ChEBI" id="CHEBI:82748"/>
        <dbReference type="EC" id="2.1.1.199"/>
    </reaction>
</comment>
<comment type="subcellular location">
    <subcellularLocation>
        <location evidence="1">Cytoplasm</location>
    </subcellularLocation>
</comment>
<comment type="similarity">
    <text evidence="1">Belongs to the methyltransferase superfamily. RsmH family.</text>
</comment>
<gene>
    <name evidence="1" type="primary">rsmH</name>
    <name type="synonym">mraW</name>
    <name type="ordered locus">MCCL_0751</name>
</gene>
<name>RSMH_MACCJ</name>
<feature type="chain" id="PRO_0000386965" description="Ribosomal RNA small subunit methyltransferase H">
    <location>
        <begin position="1"/>
        <end position="310"/>
    </location>
</feature>
<feature type="binding site" evidence="1">
    <location>
        <begin position="32"/>
        <end position="34"/>
    </location>
    <ligand>
        <name>S-adenosyl-L-methionine</name>
        <dbReference type="ChEBI" id="CHEBI:59789"/>
    </ligand>
</feature>
<feature type="binding site" evidence="1">
    <location>
        <position position="51"/>
    </location>
    <ligand>
        <name>S-adenosyl-L-methionine</name>
        <dbReference type="ChEBI" id="CHEBI:59789"/>
    </ligand>
</feature>
<feature type="binding site" evidence="1">
    <location>
        <position position="78"/>
    </location>
    <ligand>
        <name>S-adenosyl-L-methionine</name>
        <dbReference type="ChEBI" id="CHEBI:59789"/>
    </ligand>
</feature>
<feature type="binding site" evidence="1">
    <location>
        <position position="99"/>
    </location>
    <ligand>
        <name>S-adenosyl-L-methionine</name>
        <dbReference type="ChEBI" id="CHEBI:59789"/>
    </ligand>
</feature>
<feature type="binding site" evidence="1">
    <location>
        <position position="106"/>
    </location>
    <ligand>
        <name>S-adenosyl-L-methionine</name>
        <dbReference type="ChEBI" id="CHEBI:59789"/>
    </ligand>
</feature>